<keyword id="KW-0067">ATP-binding</keyword>
<keyword id="KW-0963">Cytoplasm</keyword>
<keyword id="KW-0256">Endoplasmic reticulum</keyword>
<keyword id="KW-0378">Hydrolase</keyword>
<keyword id="KW-0547">Nucleotide-binding</keyword>
<keyword id="KW-1185">Reference proteome</keyword>
<keyword id="KW-0813">Transport</keyword>
<feature type="chain" id="PRO_0000388165" description="ATPase ASNA1 homolog">
    <location>
        <begin position="1"/>
        <end position="358"/>
    </location>
</feature>
<feature type="active site" evidence="1">
    <location>
        <position position="64"/>
    </location>
</feature>
<feature type="binding site" evidence="1">
    <location>
        <begin position="35"/>
        <end position="42"/>
    </location>
    <ligand>
        <name>ATP</name>
        <dbReference type="ChEBI" id="CHEBI:30616"/>
    </ligand>
</feature>
<feature type="binding site" evidence="1">
    <location>
        <position position="235"/>
    </location>
    <ligand>
        <name>ATP</name>
        <dbReference type="ChEBI" id="CHEBI:30616"/>
    </ligand>
</feature>
<feature type="binding site" evidence="1">
    <location>
        <position position="262"/>
    </location>
    <ligand>
        <name>ATP</name>
        <dbReference type="ChEBI" id="CHEBI:30616"/>
    </ligand>
</feature>
<protein>
    <recommendedName>
        <fullName evidence="1">ATPase ASNA1 homolog</fullName>
        <ecNumber evidence="1">3.6.-.-</ecNumber>
    </recommendedName>
    <alternativeName>
        <fullName evidence="1">Arsenical pump-driving ATPase homolog</fullName>
    </alternativeName>
    <alternativeName>
        <fullName evidence="1">Arsenite-stimulated ATPase</fullName>
    </alternativeName>
</protein>
<organism>
    <name type="scientific">Babesia bovis</name>
    <dbReference type="NCBI Taxonomy" id="5865"/>
    <lineage>
        <taxon>Eukaryota</taxon>
        <taxon>Sar</taxon>
        <taxon>Alveolata</taxon>
        <taxon>Apicomplexa</taxon>
        <taxon>Aconoidasida</taxon>
        <taxon>Piroplasmida</taxon>
        <taxon>Babesiidae</taxon>
        <taxon>Babesia</taxon>
    </lineage>
</organism>
<dbReference type="EC" id="3.6.-.-" evidence="1"/>
<dbReference type="EMBL" id="AAXT02000002">
    <property type="protein sequence ID" value="EDO05277.1"/>
    <property type="molecule type" value="Genomic_DNA"/>
</dbReference>
<dbReference type="RefSeq" id="XP_001608845.1">
    <property type="nucleotide sequence ID" value="XM_001608795.1"/>
</dbReference>
<dbReference type="SMR" id="A7AW49"/>
<dbReference type="FunCoup" id="A7AW49">
    <property type="interactions" value="393"/>
</dbReference>
<dbReference type="STRING" id="5865.A7AW49"/>
<dbReference type="EnsemblProtists" id="EDO05277">
    <property type="protein sequence ID" value="EDO05277"/>
    <property type="gene ID" value="BBOV_I001930"/>
</dbReference>
<dbReference type="GeneID" id="5477061"/>
<dbReference type="KEGG" id="bbo:BBOV_I001930"/>
<dbReference type="VEuPathDB" id="PiroplasmaDB:BBOV_I001930"/>
<dbReference type="eggNOG" id="KOG2825">
    <property type="taxonomic scope" value="Eukaryota"/>
</dbReference>
<dbReference type="InParanoid" id="A7AW49"/>
<dbReference type="OMA" id="IGNNEPR"/>
<dbReference type="Proteomes" id="UP000002173">
    <property type="component" value="Unassembled WGS sequence"/>
</dbReference>
<dbReference type="GO" id="GO:0043529">
    <property type="term" value="C:GET complex"/>
    <property type="evidence" value="ECO:0007669"/>
    <property type="project" value="TreeGrafter"/>
</dbReference>
<dbReference type="GO" id="GO:0005524">
    <property type="term" value="F:ATP binding"/>
    <property type="evidence" value="ECO:0007669"/>
    <property type="project" value="UniProtKB-UniRule"/>
</dbReference>
<dbReference type="GO" id="GO:0016887">
    <property type="term" value="F:ATP hydrolysis activity"/>
    <property type="evidence" value="ECO:0007669"/>
    <property type="project" value="InterPro"/>
</dbReference>
<dbReference type="GO" id="GO:0071816">
    <property type="term" value="P:tail-anchored membrane protein insertion into ER membrane"/>
    <property type="evidence" value="ECO:0007669"/>
    <property type="project" value="TreeGrafter"/>
</dbReference>
<dbReference type="CDD" id="cd02035">
    <property type="entry name" value="ArsA"/>
    <property type="match status" value="1"/>
</dbReference>
<dbReference type="Gene3D" id="3.40.50.300">
    <property type="entry name" value="P-loop containing nucleotide triphosphate hydrolases"/>
    <property type="match status" value="1"/>
</dbReference>
<dbReference type="HAMAP" id="MF_03112">
    <property type="entry name" value="Asna1_Get3"/>
    <property type="match status" value="1"/>
</dbReference>
<dbReference type="InterPro" id="IPR025723">
    <property type="entry name" value="Anion-transp_ATPase-like_dom"/>
</dbReference>
<dbReference type="InterPro" id="IPR016300">
    <property type="entry name" value="ATPase_ArsA/GET3"/>
</dbReference>
<dbReference type="InterPro" id="IPR027542">
    <property type="entry name" value="ATPase_ArsA/GET3_euk"/>
</dbReference>
<dbReference type="InterPro" id="IPR027417">
    <property type="entry name" value="P-loop_NTPase"/>
</dbReference>
<dbReference type="NCBIfam" id="TIGR00345">
    <property type="entry name" value="GET3_arsA_TRC40"/>
    <property type="match status" value="1"/>
</dbReference>
<dbReference type="PANTHER" id="PTHR10803">
    <property type="entry name" value="ARSENICAL PUMP-DRIVING ATPASE ARSENITE-TRANSLOCATING ATPASE"/>
    <property type="match status" value="1"/>
</dbReference>
<dbReference type="PANTHER" id="PTHR10803:SF3">
    <property type="entry name" value="ATPASE GET3"/>
    <property type="match status" value="1"/>
</dbReference>
<dbReference type="Pfam" id="PF02374">
    <property type="entry name" value="ArsA_ATPase"/>
    <property type="match status" value="2"/>
</dbReference>
<dbReference type="SUPFAM" id="SSF52540">
    <property type="entry name" value="P-loop containing nucleoside triphosphate hydrolases"/>
    <property type="match status" value="1"/>
</dbReference>
<evidence type="ECO:0000255" key="1">
    <source>
        <dbReference type="HAMAP-Rule" id="MF_03112"/>
    </source>
</evidence>
<comment type="function">
    <text evidence="1">ATPase required for the post-translational delivery of tail-anchored (TA) proteins to the endoplasmic reticulum. Recognizes and selectively binds the transmembrane domain of TA proteins in the cytosol. This complex then targets to the endoplasmic reticulum by membrane-bound receptors, where the tail-anchored protein is released for insertion. This process is regulated by ATP binding and hydrolysis. ATP binding drives the homodimer towards the closed dimer state, facilitating recognition of newly synthesized TA membrane proteins. ATP hydrolysis is required for insertion. Subsequently, the homodimer reverts towards the open dimer state, lowering its affinity for the membrane-bound receptor, and returning it to the cytosol to initiate a new round of targeting.</text>
</comment>
<comment type="subunit">
    <text evidence="1">Homodimer.</text>
</comment>
<comment type="subcellular location">
    <subcellularLocation>
        <location evidence="1">Cytoplasm</location>
    </subcellularLocation>
    <subcellularLocation>
        <location evidence="1">Endoplasmic reticulum</location>
    </subcellularLocation>
</comment>
<comment type="similarity">
    <text evidence="1">Belongs to the arsA ATPase family.</text>
</comment>
<proteinExistence type="inferred from homology"/>
<accession>A7AW49</accession>
<reference key="1">
    <citation type="journal article" date="2007" name="PLoS Pathog.">
        <title>Genome sequence of Babesia bovis and comparative analysis of apicomplexan hemoprotozoa.</title>
        <authorList>
            <person name="Brayton K.A."/>
            <person name="Lau A.O.T."/>
            <person name="Herndon D.R."/>
            <person name="Hannick L."/>
            <person name="Kappmeyer L.S."/>
            <person name="Berens S.J."/>
            <person name="Bidwell S.L."/>
            <person name="Brown W.C."/>
            <person name="Crabtree J."/>
            <person name="Fadrosh D."/>
            <person name="Feldblum T."/>
            <person name="Forberger H.A."/>
            <person name="Haas B.J."/>
            <person name="Howell J.M."/>
            <person name="Khouri H."/>
            <person name="Koo H."/>
            <person name="Mann D.J."/>
            <person name="Norimine J."/>
            <person name="Paulsen I.T."/>
            <person name="Radune D."/>
            <person name="Ren Q."/>
            <person name="Smith R.K. Jr."/>
            <person name="Suarez C.E."/>
            <person name="White O."/>
            <person name="Wortman J.R."/>
            <person name="Knowles D.P. Jr."/>
            <person name="McElwain T.F."/>
            <person name="Nene V.M."/>
        </authorList>
    </citation>
    <scope>NUCLEOTIDE SEQUENCE [LARGE SCALE GENOMIC DNA]</scope>
    <source>
        <strain>T2Bo</strain>
    </source>
</reference>
<gene>
    <name type="ORF">BBOV_I001930</name>
</gene>
<name>ASNA_BABBO</name>
<sequence>MVEITEVIEPEWQTRNDIQNLVNQKTLQWVFVGGKGGVGKTTISSSIATALAETRESVLLLSTDPAHSLSDAFGQKFTHEPRLVNGFTNLYAMELNTSQIIDGLDGLRETHSFLKNVPDILMMLPGIDEALSFVELMQSVQSRRFSVTIFDTAPTGHTLKFLKLPDVLEKILDSLLKLENTMGGLLQLFSSMTKAQMSQNELFDKIKLLGDMINTTHEQMKNPDLTTFICVCIPEFLSVYETERLIQDLAKSEIDCSYIIVNQVLKHIQLGGLIEDAWDGLTEEQQRIMTPFFEKVREHHSTHNSRVDVQRKYLSDIKDLYQEDFNIVAVHQNKQEVRGKDALVAFAKKLMQHSPLPI</sequence>